<protein>
    <recommendedName>
        <fullName>Prosaposin</fullName>
    </recommendedName>
    <alternativeName>
        <fullName>Proactivator polypeptide</fullName>
    </alternativeName>
    <component>
        <recommendedName>
            <fullName>Saposin-A</fullName>
        </recommendedName>
    </component>
    <component>
        <recommendedName>
            <fullName>Saposin-B</fullName>
        </recommendedName>
    </component>
    <component>
        <recommendedName>
            <fullName>Saposin-C</fullName>
        </recommendedName>
    </component>
    <component>
        <recommendedName>
            <fullName>Saposin-D</fullName>
        </recommendedName>
    </component>
</protein>
<dbReference type="EMBL" id="AB003471">
    <property type="protein sequence ID" value="BAA19914.1"/>
    <property type="molecule type" value="mRNA"/>
</dbReference>
<dbReference type="EMBL" id="AF108656">
    <property type="protein sequence ID" value="AAF05899.1"/>
    <property type="molecule type" value="mRNA"/>
</dbReference>
<dbReference type="RefSeq" id="NP_990142.1">
    <property type="nucleotide sequence ID" value="NM_204811.2"/>
</dbReference>
<dbReference type="SMR" id="O13035"/>
<dbReference type="FunCoup" id="O13035">
    <property type="interactions" value="1966"/>
</dbReference>
<dbReference type="STRING" id="9031.ENSGALP00000049706"/>
<dbReference type="GlyCosmos" id="O13035">
    <property type="glycosylation" value="4 sites, No reported glycans"/>
</dbReference>
<dbReference type="GlyGen" id="O13035">
    <property type="glycosylation" value="4 sites"/>
</dbReference>
<dbReference type="PaxDb" id="9031-ENSGALP00000007593"/>
<dbReference type="GeneID" id="395602"/>
<dbReference type="KEGG" id="gga:395602"/>
<dbReference type="CTD" id="5660"/>
<dbReference type="VEuPathDB" id="HostDB:geneid_395602"/>
<dbReference type="eggNOG" id="KOG1340">
    <property type="taxonomic scope" value="Eukaryota"/>
</dbReference>
<dbReference type="InParanoid" id="O13035"/>
<dbReference type="OrthoDB" id="69496at2759"/>
<dbReference type="PhylomeDB" id="O13035"/>
<dbReference type="PRO" id="PR:O13035"/>
<dbReference type="Proteomes" id="UP000000539">
    <property type="component" value="Unassembled WGS sequence"/>
</dbReference>
<dbReference type="GO" id="GO:0005615">
    <property type="term" value="C:extracellular space"/>
    <property type="evidence" value="ECO:0000318"/>
    <property type="project" value="GO_Central"/>
</dbReference>
<dbReference type="GO" id="GO:0005764">
    <property type="term" value="C:lysosome"/>
    <property type="evidence" value="ECO:0007669"/>
    <property type="project" value="UniProtKB-SubCell"/>
</dbReference>
<dbReference type="GO" id="GO:0016020">
    <property type="term" value="C:membrane"/>
    <property type="evidence" value="ECO:0007669"/>
    <property type="project" value="GOC"/>
</dbReference>
<dbReference type="GO" id="GO:0007193">
    <property type="term" value="P:adenylate cyclase-inhibiting G protein-coupled receptor signaling pathway"/>
    <property type="evidence" value="ECO:0000318"/>
    <property type="project" value="GO_Central"/>
</dbReference>
<dbReference type="GO" id="GO:0019216">
    <property type="term" value="P:regulation of lipid metabolic process"/>
    <property type="evidence" value="ECO:0000318"/>
    <property type="project" value="GO_Central"/>
</dbReference>
<dbReference type="GO" id="GO:0006665">
    <property type="term" value="P:sphingolipid metabolic process"/>
    <property type="evidence" value="ECO:0007669"/>
    <property type="project" value="UniProtKB-KW"/>
</dbReference>
<dbReference type="FunFam" id="1.10.225.10:FF:000012">
    <property type="entry name" value="Proactivator polypeptide"/>
    <property type="match status" value="1"/>
</dbReference>
<dbReference type="FunFam" id="1.10.225.10:FF:000002">
    <property type="entry name" value="prosaposin isoform X2"/>
    <property type="match status" value="2"/>
</dbReference>
<dbReference type="FunFam" id="1.10.225.10:FF:000004">
    <property type="entry name" value="prosaposin isoform X2"/>
    <property type="match status" value="1"/>
</dbReference>
<dbReference type="Gene3D" id="1.10.225.10">
    <property type="entry name" value="Saposin-like"/>
    <property type="match status" value="4"/>
</dbReference>
<dbReference type="InterPro" id="IPR003119">
    <property type="entry name" value="SAP_A"/>
</dbReference>
<dbReference type="InterPro" id="IPR007856">
    <property type="entry name" value="SapB_1"/>
</dbReference>
<dbReference type="InterPro" id="IPR008138">
    <property type="entry name" value="SapB_2"/>
</dbReference>
<dbReference type="InterPro" id="IPR008373">
    <property type="entry name" value="Saposin"/>
</dbReference>
<dbReference type="InterPro" id="IPR011001">
    <property type="entry name" value="Saposin-like"/>
</dbReference>
<dbReference type="InterPro" id="IPR021165">
    <property type="entry name" value="Saposin_chordata"/>
</dbReference>
<dbReference type="InterPro" id="IPR008139">
    <property type="entry name" value="SaposinB_dom"/>
</dbReference>
<dbReference type="InterPro" id="IPR051428">
    <property type="entry name" value="Sphingo_Act-Surfact_Prot"/>
</dbReference>
<dbReference type="PANTHER" id="PTHR11480:SF3">
    <property type="entry name" value="BCDNA.GH08312"/>
    <property type="match status" value="1"/>
</dbReference>
<dbReference type="PANTHER" id="PTHR11480">
    <property type="entry name" value="SAPOSIN-RELATED"/>
    <property type="match status" value="1"/>
</dbReference>
<dbReference type="Pfam" id="PF02199">
    <property type="entry name" value="SapA"/>
    <property type="match status" value="2"/>
</dbReference>
<dbReference type="Pfam" id="PF05184">
    <property type="entry name" value="SapB_1"/>
    <property type="match status" value="3"/>
</dbReference>
<dbReference type="Pfam" id="PF03489">
    <property type="entry name" value="SapB_2"/>
    <property type="match status" value="4"/>
</dbReference>
<dbReference type="PIRSF" id="PIRSF002431">
    <property type="entry name" value="Saposin"/>
    <property type="match status" value="1"/>
</dbReference>
<dbReference type="PRINTS" id="PR01797">
    <property type="entry name" value="SAPOSIN"/>
</dbReference>
<dbReference type="SMART" id="SM00162">
    <property type="entry name" value="SAPA"/>
    <property type="match status" value="2"/>
</dbReference>
<dbReference type="SMART" id="SM00741">
    <property type="entry name" value="SapB"/>
    <property type="match status" value="4"/>
</dbReference>
<dbReference type="SUPFAM" id="SSF47862">
    <property type="entry name" value="Saposin"/>
    <property type="match status" value="4"/>
</dbReference>
<dbReference type="PROSITE" id="PS51110">
    <property type="entry name" value="SAP_A"/>
    <property type="match status" value="2"/>
</dbReference>
<dbReference type="PROSITE" id="PS50015">
    <property type="entry name" value="SAP_B"/>
    <property type="match status" value="4"/>
</dbReference>
<organism>
    <name type="scientific">Gallus gallus</name>
    <name type="common">Chicken</name>
    <dbReference type="NCBI Taxonomy" id="9031"/>
    <lineage>
        <taxon>Eukaryota</taxon>
        <taxon>Metazoa</taxon>
        <taxon>Chordata</taxon>
        <taxon>Craniata</taxon>
        <taxon>Vertebrata</taxon>
        <taxon>Euteleostomi</taxon>
        <taxon>Archelosauria</taxon>
        <taxon>Archosauria</taxon>
        <taxon>Dinosauria</taxon>
        <taxon>Saurischia</taxon>
        <taxon>Theropoda</taxon>
        <taxon>Coelurosauria</taxon>
        <taxon>Aves</taxon>
        <taxon>Neognathae</taxon>
        <taxon>Galloanserae</taxon>
        <taxon>Galliformes</taxon>
        <taxon>Phasianidae</taxon>
        <taxon>Phasianinae</taxon>
        <taxon>Gallus</taxon>
    </lineage>
</organism>
<gene>
    <name type="primary">PSAP</name>
</gene>
<sequence>MARRLLTLLGLLAAAVASPVLWQKDCAKGPEVWCQSLRTASQCGAVKHCQQNVWSKPAVNSIPCDLCKELVTVVGKVLKDNGTEDEIRSYLEKRCEFLPDQGLASECKEIVDSYLPVIMDMIKEEFDKPEVVCSALSLCQSLQKHLAAMKLQKQLQSNKIPELDFSELTSPFMANVPLLLYPQDKPKQKSKATEDVCQDCIRLVTDVQEAVRTNATFVKSLVAHAKEECDRLGPGMSDMCKSYISEYSDLAIQMMMHMKDQQPKDICAMVGFCPSVKSVPLQTLVPAQVVHEVKMETVEKATVQEKTFSVCEICETMVKEVTGLLESNKTEEEIVHEMEVVCYLLPASVKDQCKDFIEVYGQALIDMLLEATNPEAVCVMLKCCAANKPPQQPVVVKPAGGFCDICKMIVAYADKELEKNATTTEIEALLEKVCHFLPESVSDQCVQFVEQYEPVVVQLLAEMMDPTFVCTKLGVCGAAKKPLLGEDACVWGPGYWCKNMETAAQCNAVDHCRRHVWN</sequence>
<name>SAP_CHICK</name>
<accession>O13035</accession>
<comment type="function">
    <text evidence="2">The lysosomal degradation of sphingolipids takes place by the sequential action of specific hydrolases. Some of these enzymes require specific low-molecular mass, non-enzymatic proteins: the sphingolipids activator proteins (coproteins).</text>
</comment>
<comment type="function">
    <text evidence="2">Saposin-A and saposin-C stimulate the hydrolysis of glucosylceramide by beta-glucosylceramidase (EC 3.2.1.45) and galactosylceramide by beta-galactosylceramidase (EC 3.2.1.46). Saposin-C apparently acts by combining with the enzyme and acidic lipid to form an activated complex, rather than by solubilizing the substrate.</text>
</comment>
<comment type="function">
    <text evidence="2">Saposin-B stimulates the hydrolysis of galacto-cerebroside sulfate by arylsulfatase A (EC 3.1.6.8), GM1 gangliosides by beta-galactosidase (EC 3.2.1.23) and globotriaosylceramide by alpha-galactosidase A (EC 3.2.1.22). Saposin-B forms a solubilizing complex with the substrates of the sphingolipid hydrolases.</text>
</comment>
<comment type="function">
    <text evidence="2">Saposin-D is a specific sphingomyelin phosphodiesterase activator (EC 3.1.4.12).</text>
</comment>
<comment type="subunit">
    <text evidence="2">Saposin-B is a homodimer.</text>
</comment>
<comment type="subcellular location">
    <subcellularLocation>
        <location evidence="2">Lysosome</location>
    </subcellularLocation>
</comment>
<comment type="subcellular location">
    <molecule>Prosaposin</molecule>
    <subcellularLocation>
        <location evidence="3">Secreted</location>
    </subcellularLocation>
    <text evidence="3">Secreted as a fully glycosylated 70 kDa protein composed of complex glycans.</text>
</comment>
<comment type="PTM">
    <text evidence="1">This precursor is proteolytically processed to 4 small peptides, which are similar to each other and are sphingolipid hydrolase activator proteins.</text>
</comment>
<proteinExistence type="evidence at protein level"/>
<reference key="1">
    <citation type="journal article" date="1998" name="Biochem. J.">
        <title>Cloning, expression and map assignment of chicken prosaposin.</title>
        <authorList>
            <person name="Azuma N."/>
            <person name="Seo H.-C."/>
            <person name="Lie O."/>
            <person name="Fu Q."/>
            <person name="Gould R.M."/>
            <person name="Hiraiwa M."/>
            <person name="Burt D.W."/>
            <person name="Paton I.R."/>
            <person name="Morrice D.R."/>
            <person name="O'Brien J.S."/>
            <person name="Kishimoto Y."/>
        </authorList>
    </citation>
    <scope>NUCLEOTIDE SEQUENCE [MRNA]</scope>
    <scope>PROTEIN SEQUENCE OF 194-203</scope>
    <source>
        <tissue>Brain</tissue>
        <tissue>Liver</tissue>
    </source>
</reference>
<reference key="2">
    <citation type="submission" date="1998-11" db="EMBL/GenBank/DDBJ databases">
        <authorList>
            <person name="Altman N."/>
            <person name="Horowitz M."/>
        </authorList>
    </citation>
    <scope>NUCLEOTIDE SEQUENCE [MRNA]</scope>
</reference>
<feature type="signal peptide" evidence="2">
    <location>
        <begin position="1"/>
        <end position="17"/>
    </location>
</feature>
<feature type="chain" id="PRO_0000434973" description="Prosaposin" evidence="2">
    <location>
        <begin position="18"/>
        <end position="518"/>
    </location>
</feature>
<feature type="propeptide" id="PRO_0000031630" evidence="2">
    <location>
        <begin position="18"/>
        <end position="60"/>
    </location>
</feature>
<feature type="chain" id="PRO_0000031631" description="Saposin-A" evidence="2">
    <location>
        <begin position="61"/>
        <end position="143"/>
    </location>
</feature>
<feature type="propeptide" id="PRO_0000031632" evidence="8">
    <location>
        <begin position="144"/>
        <end position="193"/>
    </location>
</feature>
<feature type="chain" id="PRO_0000031633" description="Saposin-B" evidence="6">
    <location>
        <begin position="194"/>
        <end position="276"/>
    </location>
</feature>
<feature type="propeptide" id="PRO_0000031634" evidence="2">
    <location>
        <begin position="277"/>
        <end position="306"/>
    </location>
</feature>
<feature type="chain" id="PRO_0000031635" description="Saposin-C" evidence="2">
    <location>
        <begin position="307"/>
        <end position="387"/>
    </location>
</feature>
<feature type="propeptide" id="PRO_0000031636" evidence="2">
    <location>
        <begin position="388"/>
        <end position="398"/>
    </location>
</feature>
<feature type="chain" id="PRO_0000031637" description="Saposin-D" evidence="2">
    <location>
        <begin position="399"/>
        <end position="479"/>
    </location>
</feature>
<feature type="propeptide" id="PRO_0000031638" evidence="2">
    <location>
        <begin position="480"/>
        <end position="518"/>
    </location>
</feature>
<feature type="domain" description="Saposin A-type 1" evidence="4">
    <location>
        <begin position="19"/>
        <end position="59"/>
    </location>
</feature>
<feature type="domain" description="Saposin B-type 1" evidence="5">
    <location>
        <begin position="60"/>
        <end position="143"/>
    </location>
</feature>
<feature type="domain" description="Saposin B-type 2" evidence="5">
    <location>
        <begin position="193"/>
        <end position="277"/>
    </location>
</feature>
<feature type="domain" description="Saposin B-type 3" evidence="5">
    <location>
        <begin position="307"/>
        <end position="388"/>
    </location>
</feature>
<feature type="domain" description="Saposin B-type 4" evidence="5">
    <location>
        <begin position="399"/>
        <end position="480"/>
    </location>
</feature>
<feature type="domain" description="Saposin A-type 2" evidence="4">
    <location>
        <begin position="482"/>
        <end position="518"/>
    </location>
</feature>
<feature type="glycosylation site" description="N-linked (GlcNAc...) asparagine" evidence="5">
    <location>
        <position position="81"/>
    </location>
</feature>
<feature type="glycosylation site" description="N-linked (GlcNAc...) asparagine" evidence="5">
    <location>
        <position position="214"/>
    </location>
</feature>
<feature type="glycosylation site" description="N-linked (GlcNAc...) asparagine" evidence="5">
    <location>
        <position position="328"/>
    </location>
</feature>
<feature type="glycosylation site" description="N-linked (GlcNAc...) asparagine" evidence="5">
    <location>
        <position position="420"/>
    </location>
</feature>
<feature type="disulfide bond" evidence="5">
    <location>
        <begin position="64"/>
        <end position="139"/>
    </location>
</feature>
<feature type="disulfide bond" evidence="5">
    <location>
        <begin position="67"/>
        <end position="133"/>
    </location>
</feature>
<feature type="disulfide bond" evidence="5">
    <location>
        <begin position="95"/>
        <end position="107"/>
    </location>
</feature>
<feature type="disulfide bond" evidence="5">
    <location>
        <begin position="197"/>
        <end position="273"/>
    </location>
</feature>
<feature type="disulfide bond" evidence="5">
    <location>
        <begin position="200"/>
        <end position="267"/>
    </location>
</feature>
<feature type="disulfide bond" evidence="5">
    <location>
        <begin position="229"/>
        <end position="240"/>
    </location>
</feature>
<feature type="disulfide bond" evidence="5">
    <location>
        <begin position="311"/>
        <end position="384"/>
    </location>
</feature>
<feature type="disulfide bond" evidence="5">
    <location>
        <begin position="314"/>
        <end position="378"/>
    </location>
</feature>
<feature type="disulfide bond" evidence="5">
    <location>
        <begin position="342"/>
        <end position="353"/>
    </location>
</feature>
<feature type="disulfide bond" evidence="5">
    <location>
        <begin position="403"/>
        <end position="476"/>
    </location>
</feature>
<feature type="disulfide bond" evidence="5">
    <location>
        <begin position="406"/>
        <end position="470"/>
    </location>
</feature>
<feature type="disulfide bond" evidence="5">
    <location>
        <begin position="434"/>
        <end position="445"/>
    </location>
</feature>
<feature type="sequence conflict" description="In Ref. 2; AAF05899." evidence="7" ref="2">
    <original>R</original>
    <variation>T</variation>
    <location>
        <position position="94"/>
    </location>
</feature>
<feature type="sequence conflict" description="In Ref. 2; AAF05899." evidence="7" ref="2">
    <original>E</original>
    <variation>D</variation>
    <location>
        <position position="486"/>
    </location>
</feature>
<evidence type="ECO:0000250" key="1"/>
<evidence type="ECO:0000250" key="2">
    <source>
        <dbReference type="UniProtKB" id="P07602"/>
    </source>
</evidence>
<evidence type="ECO:0000250" key="3">
    <source>
        <dbReference type="UniProtKB" id="Q61207"/>
    </source>
</evidence>
<evidence type="ECO:0000255" key="4">
    <source>
        <dbReference type="PROSITE-ProRule" id="PRU00414"/>
    </source>
</evidence>
<evidence type="ECO:0000255" key="5">
    <source>
        <dbReference type="PROSITE-ProRule" id="PRU00415"/>
    </source>
</evidence>
<evidence type="ECO:0000269" key="6">
    <source>
    </source>
</evidence>
<evidence type="ECO:0000305" key="7"/>
<evidence type="ECO:0000305" key="8">
    <source>
    </source>
</evidence>
<keyword id="KW-0165">Cleavage on pair of basic residues</keyword>
<keyword id="KW-0903">Direct protein sequencing</keyword>
<keyword id="KW-1015">Disulfide bond</keyword>
<keyword id="KW-0331">Gangliosidosis</keyword>
<keyword id="KW-0325">Glycoprotein</keyword>
<keyword id="KW-0443">Lipid metabolism</keyword>
<keyword id="KW-0458">Lysosome</keyword>
<keyword id="KW-1185">Reference proteome</keyword>
<keyword id="KW-0677">Repeat</keyword>
<keyword id="KW-0964">Secreted</keyword>
<keyword id="KW-0732">Signal</keyword>
<keyword id="KW-0746">Sphingolipid metabolism</keyword>